<dbReference type="EC" id="2.1.1.72" evidence="1"/>
<dbReference type="EMBL" id="L02507">
    <property type="protein sequence ID" value="AAA27143.1"/>
    <property type="molecule type" value="Genomic_DNA"/>
</dbReference>
<dbReference type="EMBL" id="M14984">
    <property type="protein sequence ID" value="AAA27144.1"/>
    <property type="molecule type" value="Genomic_DNA"/>
</dbReference>
<dbReference type="SMR" id="P07989"/>
<dbReference type="REBASE" id="3518">
    <property type="entry name" value="M.StySPI"/>
</dbReference>
<dbReference type="PRO" id="PR:P07989"/>
<dbReference type="GO" id="GO:0003677">
    <property type="term" value="F:DNA binding"/>
    <property type="evidence" value="ECO:0007669"/>
    <property type="project" value="InterPro"/>
</dbReference>
<dbReference type="GO" id="GO:0008170">
    <property type="term" value="F:N-methyltransferase activity"/>
    <property type="evidence" value="ECO:0007669"/>
    <property type="project" value="InterPro"/>
</dbReference>
<dbReference type="GO" id="GO:0009007">
    <property type="term" value="F:site-specific DNA-methyltransferase (adenine-specific) activity"/>
    <property type="evidence" value="ECO:0007669"/>
    <property type="project" value="UniProtKB-EC"/>
</dbReference>
<dbReference type="GO" id="GO:0009307">
    <property type="term" value="P:DNA restriction-modification system"/>
    <property type="evidence" value="ECO:0007669"/>
    <property type="project" value="UniProtKB-KW"/>
</dbReference>
<dbReference type="GO" id="GO:0032259">
    <property type="term" value="P:methylation"/>
    <property type="evidence" value="ECO:0007669"/>
    <property type="project" value="UniProtKB-KW"/>
</dbReference>
<dbReference type="Gene3D" id="1.20.1260.30">
    <property type="match status" value="1"/>
</dbReference>
<dbReference type="Gene3D" id="3.40.50.150">
    <property type="entry name" value="Vaccinia Virus protein VP39"/>
    <property type="match status" value="1"/>
</dbReference>
<dbReference type="InterPro" id="IPR022749">
    <property type="entry name" value="D12N6_MeTrfase_N"/>
</dbReference>
<dbReference type="InterPro" id="IPR051537">
    <property type="entry name" value="DNA_Adenine_Mtase"/>
</dbReference>
<dbReference type="InterPro" id="IPR003356">
    <property type="entry name" value="DNA_methylase_A-5"/>
</dbReference>
<dbReference type="InterPro" id="IPR002052">
    <property type="entry name" value="DNA_methylase_N6_adenine_CS"/>
</dbReference>
<dbReference type="InterPro" id="IPR029063">
    <property type="entry name" value="SAM-dependent_MTases_sf"/>
</dbReference>
<dbReference type="InterPro" id="IPR038333">
    <property type="entry name" value="T1MK-like_N_sf"/>
</dbReference>
<dbReference type="PANTHER" id="PTHR42933">
    <property type="entry name" value="SLR6095 PROTEIN"/>
    <property type="match status" value="1"/>
</dbReference>
<dbReference type="PANTHER" id="PTHR42933:SF4">
    <property type="entry name" value="TYPE I RESTRICTION ENZYME ECOKI METHYLASE SUBUNIT"/>
    <property type="match status" value="1"/>
</dbReference>
<dbReference type="Pfam" id="PF12161">
    <property type="entry name" value="HsdM_N"/>
    <property type="match status" value="1"/>
</dbReference>
<dbReference type="Pfam" id="PF02384">
    <property type="entry name" value="N6_Mtase"/>
    <property type="match status" value="1"/>
</dbReference>
<dbReference type="PRINTS" id="PR00507">
    <property type="entry name" value="N12N6MTFRASE"/>
</dbReference>
<dbReference type="SUPFAM" id="SSF53335">
    <property type="entry name" value="S-adenosyl-L-methionine-dependent methyltransferases"/>
    <property type="match status" value="1"/>
</dbReference>
<dbReference type="PROSITE" id="PS00092">
    <property type="entry name" value="N6_MTASE"/>
    <property type="match status" value="1"/>
</dbReference>
<comment type="function">
    <text evidence="1 4 5">The subtype gamma methyltransferase (M) subunit of a type I restriction enzyme. The M and S subunits together form a methyltransferase (MTase) that methylates A-2 on the top strand and A-3 on the bottom strand of the sequence 5'-AACN(6)GTRC-3'. In the presence of the R subunit the complex can also act as an endonuclease, binding to the same target sequence but cutting the DNA some distance from this site. Whether the DNA is cut or modified depends on the methylation state of the target sequence. When the target site is unmodified, the DNA is cut. When the target site is hemimethylated, the complex acts as a maintenance MTase modifying the DNA so that both strands become methylated (PubMed:12654995, PubMed:3025838). After locating a non-methylated recognition site, the enzyme complex serves as a molecular motor that translocates DNA in an ATP-dependent manner until a collision occurs that triggers cleavage (By similarity).</text>
</comment>
<comment type="catalytic activity">
    <reaction evidence="1">
        <text>a 2'-deoxyadenosine in DNA + S-adenosyl-L-methionine = an N(6)-methyl-2'-deoxyadenosine in DNA + S-adenosyl-L-homocysteine + H(+)</text>
        <dbReference type="Rhea" id="RHEA:15197"/>
        <dbReference type="Rhea" id="RHEA-COMP:12418"/>
        <dbReference type="Rhea" id="RHEA-COMP:12419"/>
        <dbReference type="ChEBI" id="CHEBI:15378"/>
        <dbReference type="ChEBI" id="CHEBI:57856"/>
        <dbReference type="ChEBI" id="CHEBI:59789"/>
        <dbReference type="ChEBI" id="CHEBI:90615"/>
        <dbReference type="ChEBI" id="CHEBI:90616"/>
        <dbReference type="EC" id="2.1.1.72"/>
    </reaction>
</comment>
<comment type="subunit">
    <text evidence="1">The type I restriction/modification system is composed of three polypeptides R, M and S; the restriction enzyme has stoichiometry R(2)M(2)S(1) while the methyltransferase is M(2)S(1).</text>
</comment>
<comment type="miscellaneous">
    <text evidence="1">Type I restriction and modification enzymes are complex, multifunctional systems which require ATP, S-adenosyl methionine and Mg(2+) as cofactors and, in addition to their endonucleolytic and methylase activities, are potent DNA-dependent ATPases.</text>
</comment>
<comment type="similarity">
    <text evidence="7">Belongs to the N(4)/N(6)-methyltransferase family.</text>
</comment>
<sequence length="529" mass="58906">MNNNDLVAKLWKLCDNLRDGGVSYQNYVNELASLLFLKMCKETGQEADYLPEGYRWDDLKSRIGQEQLQFYRNLLVHLGADEKKLVQAVFQNVNTTITQPKQLTELVSSMDSLDWYNGDHGKSRDDFGDMYEGLLQKNANETKSGAGQYFTPRPLIKTIIHLLKPQPREVVQDPAAGTAGFLIEADRYVKSQTNDLDDLDGDAQDFQIKKAFVGLELVPGTRRLALMNCLLHDIEGNLDHGGAIRLGNTLGSDGENLPQADIVATNPPFGSAAGTNITRTFVHPTSNKQLCFMQHIIETLPPGGRAAAVVPDNVLFEGGKGTDIRRDLMDKCHLHTILRLPTGIFYAQGVKTNVLFFTKGTVANPNQDKNCTDDVWVYDLRTNMPSFGKRTPFTEQHLQPFETVYGEDPHGLSPRTEGEWSFNAEESEVADSEENKNADQHQATSRWRKFSREWIRTAKSDSLDISWLKDKDSIDADSLPEPDVLAAEAMGELVQALGELDALMRELGAGDEADAQRQLLEEAFGGVKA</sequence>
<protein>
    <recommendedName>
        <fullName>Type I restriction enzyme StySPI methylase subunit</fullName>
        <shortName>M protein</shortName>
        <ecNumber evidence="1">2.1.1.72</ecNumber>
    </recommendedName>
    <alternativeName>
        <fullName evidence="5">Type I methyltransferase M.StySPI</fullName>
        <shortName evidence="5">M.StySPI</shortName>
    </alternativeName>
    <alternativeName>
        <fullName evidence="6">Type I restriction and modification system SP</fullName>
    </alternativeName>
</protein>
<evidence type="ECO:0000250" key="1">
    <source>
        <dbReference type="UniProtKB" id="P08957"/>
    </source>
</evidence>
<evidence type="ECO:0000250" key="2">
    <source>
        <dbReference type="UniProtKB" id="Q89Z59"/>
    </source>
</evidence>
<evidence type="ECO:0000256" key="3">
    <source>
        <dbReference type="SAM" id="MobiDB-lite"/>
    </source>
</evidence>
<evidence type="ECO:0000269" key="4">
    <source>
    </source>
</evidence>
<evidence type="ECO:0000303" key="5">
    <source>
    </source>
</evidence>
<evidence type="ECO:0000303" key="6">
    <source>
    </source>
</evidence>
<evidence type="ECO:0000305" key="7"/>
<reference key="1">
    <citation type="journal article" date="1992" name="Proc. Natl. Acad. Sci. U.S.A.">
        <title>Roles of selection and recombination in the evolution of type I restriction-modification systems in enterobacteria.</title>
        <authorList>
            <person name="Sharp P.M."/>
            <person name="Kelleher J.E."/>
            <person name="Daniel A.S."/>
            <person name="Cowan G.M."/>
            <person name="Murray N.E."/>
        </authorList>
    </citation>
    <scope>NUCLEOTIDE SEQUENCE [GENOMIC DNA]</scope>
</reference>
<reference key="2">
    <citation type="journal article" date="1986" name="Proc. Natl. Acad. Sci. U.S.A.">
        <title>Two DNA recognition domains of the specificity polypeptides of a family of type I restriction enzymes.</title>
        <authorList>
            <person name="Fuller-Pace F.V."/>
            <person name="Murray N.E."/>
        </authorList>
    </citation>
    <scope>NUCLEOTIDE SEQUENCE [GENOMIC DNA] OF 455-529</scope>
    <scope>FUNCTION</scope>
</reference>
<reference key="3">
    <citation type="journal article" date="2003" name="Nucleic Acids Res.">
        <title>A nomenclature for restriction enzymes, DNA methyltransferases, homing endonucleases and their genes.</title>
        <authorList>
            <person name="Roberts R.J."/>
            <person name="Belfort M."/>
            <person name="Bestor T."/>
            <person name="Bhagwat A.S."/>
            <person name="Bickle T.A."/>
            <person name="Bitinaite J."/>
            <person name="Blumenthal R.M."/>
            <person name="Degtyarev S.K."/>
            <person name="Dryden D.T."/>
            <person name="Dybvig K."/>
            <person name="Firman K."/>
            <person name="Gromova E.S."/>
            <person name="Gumport R.I."/>
            <person name="Halford S.E."/>
            <person name="Hattman S."/>
            <person name="Heitman J."/>
            <person name="Hornby D.P."/>
            <person name="Janulaitis A."/>
            <person name="Jeltsch A."/>
            <person name="Josephsen J."/>
            <person name="Kiss A."/>
            <person name="Klaenhammer T.R."/>
            <person name="Kobayashi I."/>
            <person name="Kong H."/>
            <person name="Krueger D.H."/>
            <person name="Lacks S."/>
            <person name="Marinus M.G."/>
            <person name="Miyahara M."/>
            <person name="Morgan R.D."/>
            <person name="Murray N.E."/>
            <person name="Nagaraja V."/>
            <person name="Piekarowicz A."/>
            <person name="Pingoud A."/>
            <person name="Raleigh E."/>
            <person name="Rao D.N."/>
            <person name="Reich N."/>
            <person name="Repin V.E."/>
            <person name="Selker E.U."/>
            <person name="Shaw P.C."/>
            <person name="Stein D.C."/>
            <person name="Stoddard B.L."/>
            <person name="Szybalski W."/>
            <person name="Trautner T.A."/>
            <person name="Van Etten J.L."/>
            <person name="Vitor J.M."/>
            <person name="Wilson G.G."/>
            <person name="Xu S.Y."/>
        </authorList>
    </citation>
    <scope>NOMENCLATURE</scope>
    <scope>SUBTYPE</scope>
</reference>
<name>T1M_SALPO</name>
<proteinExistence type="inferred from homology"/>
<keyword id="KW-0489">Methyltransferase</keyword>
<keyword id="KW-0680">Restriction system</keyword>
<keyword id="KW-0949">S-adenosyl-L-methionine</keyword>
<keyword id="KW-0808">Transferase</keyword>
<gene>
    <name evidence="6" type="primary">hsdM</name>
    <name type="synonym">hsdT</name>
</gene>
<accession>P07989</accession>
<feature type="chain" id="PRO_0000088025" description="Type I restriction enzyme StySPI methylase subunit">
    <location>
        <begin position="1"/>
        <end position="529"/>
    </location>
</feature>
<feature type="region of interest" description="Disordered" evidence="3">
    <location>
        <begin position="424"/>
        <end position="443"/>
    </location>
</feature>
<feature type="binding site" evidence="2">
    <location>
        <begin position="148"/>
        <end position="153"/>
    </location>
    <ligand>
        <name>S-adenosyl-L-methionine</name>
        <dbReference type="ChEBI" id="CHEBI:59789"/>
    </ligand>
</feature>
<feature type="binding site" evidence="2">
    <location>
        <begin position="178"/>
        <end position="180"/>
    </location>
    <ligand>
        <name>S-adenosyl-L-methionine</name>
        <dbReference type="ChEBI" id="CHEBI:59789"/>
    </ligand>
</feature>
<feature type="binding site" evidence="2">
    <location>
        <position position="216"/>
    </location>
    <ligand>
        <name>S-adenosyl-L-methionine</name>
        <dbReference type="ChEBI" id="CHEBI:59789"/>
    </ligand>
</feature>
<organism>
    <name type="scientific">Salmonella potsdam</name>
    <dbReference type="NCBI Taxonomy" id="597"/>
    <lineage>
        <taxon>Bacteria</taxon>
        <taxon>Pseudomonadati</taxon>
        <taxon>Pseudomonadota</taxon>
        <taxon>Gammaproteobacteria</taxon>
        <taxon>Enterobacterales</taxon>
        <taxon>Enterobacteriaceae</taxon>
        <taxon>Salmonella</taxon>
    </lineage>
</organism>